<reference key="1">
    <citation type="journal article" date="2001" name="Nature">
        <title>Complete genome sequence of a multiple drug resistant Salmonella enterica serovar Typhi CT18.</title>
        <authorList>
            <person name="Parkhill J."/>
            <person name="Dougan G."/>
            <person name="James K.D."/>
            <person name="Thomson N.R."/>
            <person name="Pickard D."/>
            <person name="Wain J."/>
            <person name="Churcher C.M."/>
            <person name="Mungall K.L."/>
            <person name="Bentley S.D."/>
            <person name="Holden M.T.G."/>
            <person name="Sebaihia M."/>
            <person name="Baker S."/>
            <person name="Basham D."/>
            <person name="Brooks K."/>
            <person name="Chillingworth T."/>
            <person name="Connerton P."/>
            <person name="Cronin A."/>
            <person name="Davis P."/>
            <person name="Davies R.M."/>
            <person name="Dowd L."/>
            <person name="White N."/>
            <person name="Farrar J."/>
            <person name="Feltwell T."/>
            <person name="Hamlin N."/>
            <person name="Haque A."/>
            <person name="Hien T.T."/>
            <person name="Holroyd S."/>
            <person name="Jagels K."/>
            <person name="Krogh A."/>
            <person name="Larsen T.S."/>
            <person name="Leather S."/>
            <person name="Moule S."/>
            <person name="O'Gaora P."/>
            <person name="Parry C."/>
            <person name="Quail M.A."/>
            <person name="Rutherford K.M."/>
            <person name="Simmonds M."/>
            <person name="Skelton J."/>
            <person name="Stevens K."/>
            <person name="Whitehead S."/>
            <person name="Barrell B.G."/>
        </authorList>
    </citation>
    <scope>NUCLEOTIDE SEQUENCE [LARGE SCALE GENOMIC DNA]</scope>
    <source>
        <strain>CT18</strain>
    </source>
</reference>
<reference key="2">
    <citation type="journal article" date="2003" name="J. Bacteriol.">
        <title>Comparative genomics of Salmonella enterica serovar Typhi strains Ty2 and CT18.</title>
        <authorList>
            <person name="Deng W."/>
            <person name="Liou S.-R."/>
            <person name="Plunkett G. III"/>
            <person name="Mayhew G.F."/>
            <person name="Rose D.J."/>
            <person name="Burland V."/>
            <person name="Kodoyianni V."/>
            <person name="Schwartz D.C."/>
            <person name="Blattner F.R."/>
        </authorList>
    </citation>
    <scope>NUCLEOTIDE SEQUENCE [LARGE SCALE GENOMIC DNA]</scope>
    <source>
        <strain>ATCC 700931 / Ty2</strain>
    </source>
</reference>
<sequence>MARVTVQDAVEKIGNRFDLVLVAARRARQMQVGGKDPLVPEENDKTTVIALREIEEGLINNQILDVRERQEQQEQEAAELQAVTAIAEGRR</sequence>
<evidence type="ECO:0000250" key="1"/>
<evidence type="ECO:0000305" key="2"/>
<dbReference type="EC" id="2.7.7.6"/>
<dbReference type="EMBL" id="AL513382">
    <property type="protein sequence ID" value="CAD03252.1"/>
    <property type="molecule type" value="Genomic_DNA"/>
</dbReference>
<dbReference type="EMBL" id="AE014613">
    <property type="protein sequence ID" value="AAO71260.1"/>
    <property type="molecule type" value="Genomic_DNA"/>
</dbReference>
<dbReference type="RefSeq" id="NP_458186.1">
    <property type="nucleotide sequence ID" value="NC_003198.1"/>
</dbReference>
<dbReference type="RefSeq" id="WP_000135058.1">
    <property type="nucleotide sequence ID" value="NZ_WSUR01000001.1"/>
</dbReference>
<dbReference type="SMR" id="P0A804"/>
<dbReference type="STRING" id="220341.gene:17587896"/>
<dbReference type="GeneID" id="98390719"/>
<dbReference type="KEGG" id="stt:t3777"/>
<dbReference type="KEGG" id="sty:STY4051"/>
<dbReference type="PATRIC" id="fig|220341.7.peg.4135"/>
<dbReference type="eggNOG" id="COG1758">
    <property type="taxonomic scope" value="Bacteria"/>
</dbReference>
<dbReference type="HOGENOM" id="CLU_125406_5_3_6"/>
<dbReference type="OMA" id="NVDNRFQ"/>
<dbReference type="OrthoDB" id="9796300at2"/>
<dbReference type="Proteomes" id="UP000000541">
    <property type="component" value="Chromosome"/>
</dbReference>
<dbReference type="Proteomes" id="UP000002670">
    <property type="component" value="Chromosome"/>
</dbReference>
<dbReference type="GO" id="GO:0000428">
    <property type="term" value="C:DNA-directed RNA polymerase complex"/>
    <property type="evidence" value="ECO:0007669"/>
    <property type="project" value="UniProtKB-KW"/>
</dbReference>
<dbReference type="GO" id="GO:0003677">
    <property type="term" value="F:DNA binding"/>
    <property type="evidence" value="ECO:0007669"/>
    <property type="project" value="UniProtKB-UniRule"/>
</dbReference>
<dbReference type="GO" id="GO:0003899">
    <property type="term" value="F:DNA-directed RNA polymerase activity"/>
    <property type="evidence" value="ECO:0007669"/>
    <property type="project" value="UniProtKB-UniRule"/>
</dbReference>
<dbReference type="GO" id="GO:0006351">
    <property type="term" value="P:DNA-templated transcription"/>
    <property type="evidence" value="ECO:0007669"/>
    <property type="project" value="UniProtKB-UniRule"/>
</dbReference>
<dbReference type="FunFam" id="3.90.940.10:FF:000001">
    <property type="entry name" value="DNA-directed RNA polymerase subunit omega"/>
    <property type="match status" value="1"/>
</dbReference>
<dbReference type="Gene3D" id="3.90.940.10">
    <property type="match status" value="1"/>
</dbReference>
<dbReference type="HAMAP" id="MF_00366">
    <property type="entry name" value="RNApol_bact_RpoZ"/>
    <property type="match status" value="1"/>
</dbReference>
<dbReference type="InterPro" id="IPR003716">
    <property type="entry name" value="DNA-dir_RNA_pol_omega"/>
</dbReference>
<dbReference type="InterPro" id="IPR006110">
    <property type="entry name" value="Pol_omega/Rpo6/RPB6"/>
</dbReference>
<dbReference type="InterPro" id="IPR036161">
    <property type="entry name" value="RPB6/omega-like_sf"/>
</dbReference>
<dbReference type="NCBIfam" id="TIGR00690">
    <property type="entry name" value="rpoZ"/>
    <property type="match status" value="1"/>
</dbReference>
<dbReference type="PANTHER" id="PTHR34476">
    <property type="entry name" value="DNA-DIRECTED RNA POLYMERASE SUBUNIT OMEGA"/>
    <property type="match status" value="1"/>
</dbReference>
<dbReference type="PANTHER" id="PTHR34476:SF1">
    <property type="entry name" value="DNA-DIRECTED RNA POLYMERASE SUBUNIT OMEGA"/>
    <property type="match status" value="1"/>
</dbReference>
<dbReference type="Pfam" id="PF01192">
    <property type="entry name" value="RNA_pol_Rpb6"/>
    <property type="match status" value="1"/>
</dbReference>
<dbReference type="SMART" id="SM01409">
    <property type="entry name" value="RNA_pol_Rpb6"/>
    <property type="match status" value="1"/>
</dbReference>
<dbReference type="SUPFAM" id="SSF63562">
    <property type="entry name" value="RPB6/omega subunit-like"/>
    <property type="match status" value="1"/>
</dbReference>
<feature type="chain" id="PRO_0000128972" description="DNA-directed RNA polymerase subunit omega">
    <location>
        <begin position="1"/>
        <end position="91"/>
    </location>
</feature>
<keyword id="KW-0240">DNA-directed RNA polymerase</keyword>
<keyword id="KW-0548">Nucleotidyltransferase</keyword>
<keyword id="KW-0804">Transcription</keyword>
<keyword id="KW-0808">Transferase</keyword>
<gene>
    <name type="primary">rpoZ</name>
    <name type="ordered locus">STY4051</name>
    <name type="ordered locus">t3777</name>
</gene>
<proteinExistence type="inferred from homology"/>
<name>RPOZ_SALTI</name>
<protein>
    <recommendedName>
        <fullName>DNA-directed RNA polymerase subunit omega</fullName>
        <shortName>RNAP omega subunit</shortName>
        <ecNumber>2.7.7.6</ecNumber>
    </recommendedName>
    <alternativeName>
        <fullName>RNA polymerase omega subunit</fullName>
    </alternativeName>
    <alternativeName>
        <fullName>Transcriptase subunit omega</fullName>
    </alternativeName>
</protein>
<organism>
    <name type="scientific">Salmonella typhi</name>
    <dbReference type="NCBI Taxonomy" id="90370"/>
    <lineage>
        <taxon>Bacteria</taxon>
        <taxon>Pseudomonadati</taxon>
        <taxon>Pseudomonadota</taxon>
        <taxon>Gammaproteobacteria</taxon>
        <taxon>Enterobacterales</taxon>
        <taxon>Enterobacteriaceae</taxon>
        <taxon>Salmonella</taxon>
    </lineage>
</organism>
<comment type="function">
    <text evidence="1">Promotes RNA polymerase assembly. Latches the N- and C-terminal regions of the beta' subunit thereby facilitating its interaction with the beta and alpha subunits (By similarity).</text>
</comment>
<comment type="catalytic activity">
    <reaction>
        <text>RNA(n) + a ribonucleoside 5'-triphosphate = RNA(n+1) + diphosphate</text>
        <dbReference type="Rhea" id="RHEA:21248"/>
        <dbReference type="Rhea" id="RHEA-COMP:14527"/>
        <dbReference type="Rhea" id="RHEA-COMP:17342"/>
        <dbReference type="ChEBI" id="CHEBI:33019"/>
        <dbReference type="ChEBI" id="CHEBI:61557"/>
        <dbReference type="ChEBI" id="CHEBI:140395"/>
        <dbReference type="EC" id="2.7.7.6"/>
    </reaction>
</comment>
<comment type="subunit">
    <text evidence="1">The RNAP catalytic core consists of 2 alpha, 1 beta, 1 beta' and 1 omega subunit. When a sigma factor is associated with the core the holoenzyme is formed, which can initiate transcription (By similarity).</text>
</comment>
<comment type="similarity">
    <text evidence="2">Belongs to the RNA polymerase subunit omega family.</text>
</comment>
<accession>P0A804</accession>
<accession>P08374</accession>